<protein>
    <recommendedName>
        <fullName evidence="5">Protein LSO1</fullName>
    </recommendedName>
    <alternativeName>
        <fullName evidence="4">Late-annotated small open reading frame 1</fullName>
    </alternativeName>
</protein>
<keyword id="KW-0175">Coiled coil</keyword>
<keyword id="KW-0963">Cytoplasm</keyword>
<keyword id="KW-0539">Nucleus</keyword>
<keyword id="KW-1185">Reference proteome</keyword>
<comment type="function">
    <text evidence="3">Likely to play a role in iron homeostasis.</text>
</comment>
<comment type="subcellular location">
    <subcellularLocation>
        <location evidence="3">Nucleus</location>
    </subcellularLocation>
    <subcellularLocation>
        <location evidence="3">Cytoplasm</location>
    </subcellularLocation>
    <text evidence="3">Under iron-replete conditions, enriched in the nucleus. Under iron-depleted conditions, expressed in both nucleus and cytoplasm.</text>
</comment>
<comment type="induction">
    <text evidence="3">By iron starvation.</text>
</comment>
<comment type="disruption phenotype">
    <text evidence="3">Mild slow-growth phenotype in response to reduced iron levels.</text>
</comment>
<proteinExistence type="evidence at transcript level"/>
<accession>Q3E827</accession>
<accession>D6VWI0</accession>
<sequence length="93" mass="10869">MHNTGKRYSETAKKVAAGRARKRRQAYEKDQLEKQQLEAQEAQRWEEGARTPNQKKLIMEQKKTEKLRAKKERDQLLAAEEEALGKGGRGKRY</sequence>
<gene>
    <name evidence="4 6" type="primary">LSO1</name>
    <name evidence="6" type="ordered locus">YJR005C-A</name>
</gene>
<organism>
    <name type="scientific">Saccharomyces cerevisiae (strain ATCC 204508 / S288c)</name>
    <name type="common">Baker's yeast</name>
    <dbReference type="NCBI Taxonomy" id="559292"/>
    <lineage>
        <taxon>Eukaryota</taxon>
        <taxon>Fungi</taxon>
        <taxon>Dikarya</taxon>
        <taxon>Ascomycota</taxon>
        <taxon>Saccharomycotina</taxon>
        <taxon>Saccharomycetes</taxon>
        <taxon>Saccharomycetales</taxon>
        <taxon>Saccharomycetaceae</taxon>
        <taxon>Saccharomyces</taxon>
    </lineage>
</organism>
<feature type="chain" id="PRO_0000245415" description="Protein LSO1">
    <location>
        <begin position="1"/>
        <end position="93"/>
    </location>
</feature>
<feature type="region of interest" description="Disordered" evidence="2">
    <location>
        <begin position="1"/>
        <end position="73"/>
    </location>
</feature>
<feature type="coiled-coil region" evidence="1">
    <location>
        <begin position="20"/>
        <end position="83"/>
    </location>
</feature>
<feature type="compositionally biased region" description="Basic and acidic residues" evidence="2">
    <location>
        <begin position="25"/>
        <end position="49"/>
    </location>
</feature>
<feature type="compositionally biased region" description="Basic and acidic residues" evidence="2">
    <location>
        <begin position="57"/>
        <end position="73"/>
    </location>
</feature>
<name>LSO1_YEAST</name>
<evidence type="ECO:0000255" key="1"/>
<evidence type="ECO:0000256" key="2">
    <source>
        <dbReference type="SAM" id="MobiDB-lite"/>
    </source>
</evidence>
<evidence type="ECO:0000269" key="3">
    <source>
    </source>
</evidence>
<evidence type="ECO:0000303" key="4">
    <source>
    </source>
</evidence>
<evidence type="ECO:0000305" key="5"/>
<evidence type="ECO:0000312" key="6">
    <source>
        <dbReference type="SGD" id="S000028523"/>
    </source>
</evidence>
<dbReference type="EMBL" id="Z49506">
    <property type="status" value="NOT_ANNOTATED_CDS"/>
    <property type="molecule type" value="Genomic_DNA"/>
</dbReference>
<dbReference type="EMBL" id="BK006943">
    <property type="protein sequence ID" value="DAA08796.1"/>
    <property type="molecule type" value="Genomic_DNA"/>
</dbReference>
<dbReference type="RefSeq" id="NP_878106.1">
    <property type="nucleotide sequence ID" value="NM_001184533.1"/>
</dbReference>
<dbReference type="SMR" id="Q3E827"/>
<dbReference type="BioGRID" id="37011">
    <property type="interactions" value="10"/>
</dbReference>
<dbReference type="FunCoup" id="Q3E827">
    <property type="interactions" value="8"/>
</dbReference>
<dbReference type="STRING" id="4932.YJR005C-A"/>
<dbReference type="PaxDb" id="4932-YJR005C-A"/>
<dbReference type="PeptideAtlas" id="Q3E827"/>
<dbReference type="EnsemblFungi" id="YJR005C-A_mRNA">
    <property type="protein sequence ID" value="YJR005C-A"/>
    <property type="gene ID" value="YJR005C-A"/>
</dbReference>
<dbReference type="GeneID" id="1466469"/>
<dbReference type="KEGG" id="sce:YJR005C-A"/>
<dbReference type="AGR" id="SGD:S000028523"/>
<dbReference type="SGD" id="S000028523">
    <property type="gene designation" value="LSO1"/>
</dbReference>
<dbReference type="VEuPathDB" id="FungiDB:YJR005C-A"/>
<dbReference type="eggNOG" id="KOG3223">
    <property type="taxonomic scope" value="Eukaryota"/>
</dbReference>
<dbReference type="GeneTree" id="ENSGT00940000176679"/>
<dbReference type="HOGENOM" id="CLU_186256_0_0_1"/>
<dbReference type="InParanoid" id="Q3E827"/>
<dbReference type="OMA" id="QEAQRWE"/>
<dbReference type="OrthoDB" id="4069860at2759"/>
<dbReference type="BioCyc" id="YEAST:G3O-31805-MONOMER"/>
<dbReference type="BioGRID-ORCS" id="1466469">
    <property type="hits" value="0 hits in 10 CRISPR screens"/>
</dbReference>
<dbReference type="PRO" id="PR:Q3E827"/>
<dbReference type="Proteomes" id="UP000002311">
    <property type="component" value="Chromosome X"/>
</dbReference>
<dbReference type="RNAct" id="Q3E827">
    <property type="molecule type" value="protein"/>
</dbReference>
<dbReference type="GO" id="GO:0005737">
    <property type="term" value="C:cytoplasm"/>
    <property type="evidence" value="ECO:0000314"/>
    <property type="project" value="SGD"/>
</dbReference>
<dbReference type="GO" id="GO:0005634">
    <property type="term" value="C:nucleus"/>
    <property type="evidence" value="ECO:0000314"/>
    <property type="project" value="SGD"/>
</dbReference>
<dbReference type="GO" id="GO:0006879">
    <property type="term" value="P:intracellular iron ion homeostasis"/>
    <property type="evidence" value="ECO:0000315"/>
    <property type="project" value="SGD"/>
</dbReference>
<dbReference type="InterPro" id="IPR054413">
    <property type="entry name" value="LSO1/2"/>
</dbReference>
<dbReference type="Pfam" id="PF22048">
    <property type="entry name" value="LSO1_2-like"/>
    <property type="match status" value="1"/>
</dbReference>
<reference key="1">
    <citation type="journal article" date="1996" name="EMBO J.">
        <title>Complete nucleotide sequence of Saccharomyces cerevisiae chromosome X.</title>
        <authorList>
            <person name="Galibert F."/>
            <person name="Alexandraki D."/>
            <person name="Baur A."/>
            <person name="Boles E."/>
            <person name="Chalwatzis N."/>
            <person name="Chuat J.-C."/>
            <person name="Coster F."/>
            <person name="Cziepluch C."/>
            <person name="de Haan M."/>
            <person name="Domdey H."/>
            <person name="Durand P."/>
            <person name="Entian K.-D."/>
            <person name="Gatius M."/>
            <person name="Goffeau A."/>
            <person name="Grivell L.A."/>
            <person name="Hennemann A."/>
            <person name="Herbert C.J."/>
            <person name="Heumann K."/>
            <person name="Hilger F."/>
            <person name="Hollenberg C.P."/>
            <person name="Huang M.-E."/>
            <person name="Jacq C."/>
            <person name="Jauniaux J.-C."/>
            <person name="Katsoulou C."/>
            <person name="Kirchrath L."/>
            <person name="Kleine K."/>
            <person name="Kordes E."/>
            <person name="Koetter P."/>
            <person name="Liebl S."/>
            <person name="Louis E.J."/>
            <person name="Manus V."/>
            <person name="Mewes H.-W."/>
            <person name="Miosga T."/>
            <person name="Obermaier B."/>
            <person name="Perea J."/>
            <person name="Pohl T.M."/>
            <person name="Portetelle D."/>
            <person name="Pujol A."/>
            <person name="Purnelle B."/>
            <person name="Ramezani Rad M."/>
            <person name="Rasmussen S.W."/>
            <person name="Rose M."/>
            <person name="Rossau R."/>
            <person name="Schaaff-Gerstenschlaeger I."/>
            <person name="Smits P.H.M."/>
            <person name="Scarcez T."/>
            <person name="Soriano N."/>
            <person name="To Van D."/>
            <person name="Tzermia M."/>
            <person name="Van Broekhoven A."/>
            <person name="Vandenbol M."/>
            <person name="Wedler H."/>
            <person name="von Wettstein D."/>
            <person name="Wambutt R."/>
            <person name="Zagulski M."/>
            <person name="Zollner A."/>
            <person name="Karpfinger-Hartl L."/>
        </authorList>
    </citation>
    <scope>NUCLEOTIDE SEQUENCE [LARGE SCALE GENOMIC DNA]</scope>
    <source>
        <strain>ATCC 204508 / S288c</strain>
    </source>
</reference>
<reference key="2">
    <citation type="journal article" date="2014" name="G3 (Bethesda)">
        <title>The reference genome sequence of Saccharomyces cerevisiae: Then and now.</title>
        <authorList>
            <person name="Engel S.R."/>
            <person name="Dietrich F.S."/>
            <person name="Fisk D.G."/>
            <person name="Binkley G."/>
            <person name="Balakrishnan R."/>
            <person name="Costanzo M.C."/>
            <person name="Dwight S.S."/>
            <person name="Hitz B.C."/>
            <person name="Karra K."/>
            <person name="Nash R.S."/>
            <person name="Weng S."/>
            <person name="Wong E.D."/>
            <person name="Lloyd P."/>
            <person name="Skrzypek M.S."/>
            <person name="Miyasato S.R."/>
            <person name="Simison M."/>
            <person name="Cherry J.M."/>
        </authorList>
    </citation>
    <scope>GENOME REANNOTATION</scope>
    <source>
        <strain>ATCC 204508 / S288c</strain>
    </source>
</reference>
<reference key="3">
    <citation type="journal article" date="2003" name="Genome Biol.">
        <title>Reinvestigation of the Saccharomyces cerevisiae genome annotation by comparison to the genome of a related fungus: Ashbya gossypii.</title>
        <authorList>
            <person name="Brachat S."/>
            <person name="Dietrich F.S."/>
            <person name="Voegeli S."/>
            <person name="Zhang Z."/>
            <person name="Stuart L."/>
            <person name="Lerch A."/>
            <person name="Gates K."/>
            <person name="Gaffney T.D."/>
            <person name="Philippsen P."/>
        </authorList>
    </citation>
    <scope>GENOME REANNOTATION</scope>
</reference>
<reference key="4">
    <citation type="journal article" date="2015" name="MicrobiologyOpen">
        <title>The late-annotated small ORF LSO1 is a target gene of the iron regulon of Saccharomyces cerevisiae.</title>
        <authorList>
            <person name="An X."/>
            <person name="Zhang C."/>
            <person name="Sclafani R.A."/>
            <person name="Seligman P."/>
            <person name="Huang M."/>
        </authorList>
    </citation>
    <scope>FUNCTION</scope>
    <scope>SUBCELLULAR LOCATION</scope>
    <scope>INDUCTION</scope>
    <scope>DISRUPTION PHENOTYPE</scope>
</reference>